<comment type="function">
    <text evidence="2">Required for translation of most natural mRNAs except for leaderless mRNA. Binds mRNA upstream of the Shine-Dalgarno (SD) sequence and helps it bind to the 30S ribosomal subunit; acts as an RNA chaperone to unfold structured mRNA on the ribosome but is not essential for mRNAs with strong SDs and little 5'-UTR structure, thus it may help fine-tune which mRNAs that are translated. Unwinds dsRNA by binding to transiently formed ssRNA regions; binds about 10 nucleotides. Has a preference for polypyrimidine tracts. Negatively autoregulates its own translation.</text>
</comment>
<comment type="subunit">
    <text evidence="1">Part of the 30S ribosomal subunit. Some nascent polypeptide chains are able to cross-link to this protein in situ. Can be cross-linked to mRNA in the ribosome (By similarity).</text>
</comment>
<comment type="PTM">
    <text evidence="1">Phosphorylated; probably on a serine.</text>
</comment>
<comment type="similarity">
    <text evidence="4">Belongs to the bacterial ribosomal protein bS1 family.</text>
</comment>
<accession>P0AG68</accession>
<accession>P02349</accession>
<accession>P77352</accession>
<name>RS1_ECOL6</name>
<protein>
    <recommendedName>
        <fullName evidence="4">Small ribosomal subunit protein bS1</fullName>
    </recommendedName>
    <alternativeName>
        <fullName>30S ribosomal protein S1</fullName>
    </alternativeName>
</protein>
<reference key="1">
    <citation type="journal article" date="2002" name="Proc. Natl. Acad. Sci. U.S.A.">
        <title>Extensive mosaic structure revealed by the complete genome sequence of uropathogenic Escherichia coli.</title>
        <authorList>
            <person name="Welch R.A."/>
            <person name="Burland V."/>
            <person name="Plunkett G. III"/>
            <person name="Redford P."/>
            <person name="Roesch P."/>
            <person name="Rasko D."/>
            <person name="Buckles E.L."/>
            <person name="Liou S.-R."/>
            <person name="Boutin A."/>
            <person name="Hackett J."/>
            <person name="Stroud D."/>
            <person name="Mayhew G.F."/>
            <person name="Rose D.J."/>
            <person name="Zhou S."/>
            <person name="Schwartz D.C."/>
            <person name="Perna N.T."/>
            <person name="Mobley H.L.T."/>
            <person name="Donnenberg M.S."/>
            <person name="Blattner F.R."/>
        </authorList>
    </citation>
    <scope>NUCLEOTIDE SEQUENCE [LARGE SCALE GENOMIC DNA]</scope>
    <source>
        <strain>CFT073 / ATCC 700928 / UPEC</strain>
    </source>
</reference>
<organism>
    <name type="scientific">Escherichia coli O6:H1 (strain CFT073 / ATCC 700928 / UPEC)</name>
    <dbReference type="NCBI Taxonomy" id="199310"/>
    <lineage>
        <taxon>Bacteria</taxon>
        <taxon>Pseudomonadati</taxon>
        <taxon>Pseudomonadota</taxon>
        <taxon>Gammaproteobacteria</taxon>
        <taxon>Enterobacterales</taxon>
        <taxon>Enterobacteriaceae</taxon>
        <taxon>Escherichia</taxon>
    </lineage>
</organism>
<evidence type="ECO:0000250" key="1"/>
<evidence type="ECO:0000250" key="2">
    <source>
        <dbReference type="UniProtKB" id="P0AG67"/>
    </source>
</evidence>
<evidence type="ECO:0000255" key="3">
    <source>
        <dbReference type="PROSITE-ProRule" id="PRU00180"/>
    </source>
</evidence>
<evidence type="ECO:0000305" key="4"/>
<proteinExistence type="inferred from homology"/>
<dbReference type="EMBL" id="AE014075">
    <property type="protein sequence ID" value="AAN79519.1"/>
    <property type="molecule type" value="Genomic_DNA"/>
</dbReference>
<dbReference type="RefSeq" id="WP_000140327.1">
    <property type="nucleotide sequence ID" value="NZ_CP051263.1"/>
</dbReference>
<dbReference type="BMRB" id="P0AG68"/>
<dbReference type="SMR" id="P0AG68"/>
<dbReference type="STRING" id="199310.c1049"/>
<dbReference type="GeneID" id="93776506"/>
<dbReference type="KEGG" id="ecc:c1049"/>
<dbReference type="eggNOG" id="COG0539">
    <property type="taxonomic scope" value="Bacteria"/>
</dbReference>
<dbReference type="HOGENOM" id="CLU_015805_2_1_6"/>
<dbReference type="BioCyc" id="ECOL199310:C1049-MONOMER"/>
<dbReference type="Proteomes" id="UP000001410">
    <property type="component" value="Chromosome"/>
</dbReference>
<dbReference type="GO" id="GO:0022627">
    <property type="term" value="C:cytosolic small ribosomal subunit"/>
    <property type="evidence" value="ECO:0007669"/>
    <property type="project" value="TreeGrafter"/>
</dbReference>
<dbReference type="GO" id="GO:0003729">
    <property type="term" value="F:mRNA binding"/>
    <property type="evidence" value="ECO:0007669"/>
    <property type="project" value="TreeGrafter"/>
</dbReference>
<dbReference type="GO" id="GO:0003735">
    <property type="term" value="F:structural constituent of ribosome"/>
    <property type="evidence" value="ECO:0007669"/>
    <property type="project" value="InterPro"/>
</dbReference>
<dbReference type="GO" id="GO:0006412">
    <property type="term" value="P:translation"/>
    <property type="evidence" value="ECO:0007669"/>
    <property type="project" value="InterPro"/>
</dbReference>
<dbReference type="CDD" id="cd05687">
    <property type="entry name" value="S1_RPS1_repeat_ec1_hs1"/>
    <property type="match status" value="1"/>
</dbReference>
<dbReference type="CDD" id="cd04465">
    <property type="entry name" value="S1_RPS1_repeat_ec2_hs2"/>
    <property type="match status" value="1"/>
</dbReference>
<dbReference type="CDD" id="cd05688">
    <property type="entry name" value="S1_RPS1_repeat_ec3"/>
    <property type="match status" value="1"/>
</dbReference>
<dbReference type="CDD" id="cd05689">
    <property type="entry name" value="S1_RPS1_repeat_ec4"/>
    <property type="match status" value="1"/>
</dbReference>
<dbReference type="CDD" id="cd05690">
    <property type="entry name" value="S1_RPS1_repeat_ec5"/>
    <property type="match status" value="1"/>
</dbReference>
<dbReference type="CDD" id="cd05691">
    <property type="entry name" value="S1_RPS1_repeat_ec6"/>
    <property type="match status" value="1"/>
</dbReference>
<dbReference type="FunFam" id="2.40.50.140:FF:000011">
    <property type="entry name" value="30S ribosomal protein S1"/>
    <property type="match status" value="1"/>
</dbReference>
<dbReference type="FunFam" id="2.40.50.140:FF:000016">
    <property type="entry name" value="30S ribosomal protein S1"/>
    <property type="match status" value="1"/>
</dbReference>
<dbReference type="FunFam" id="2.40.50.140:FF:000017">
    <property type="entry name" value="30S ribosomal protein S1"/>
    <property type="match status" value="1"/>
</dbReference>
<dbReference type="FunFam" id="2.40.50.140:FF:000018">
    <property type="entry name" value="30S ribosomal protein S1"/>
    <property type="match status" value="1"/>
</dbReference>
<dbReference type="FunFam" id="2.40.50.140:FF:000021">
    <property type="entry name" value="30S ribosomal protein S1"/>
    <property type="match status" value="1"/>
</dbReference>
<dbReference type="FunFam" id="2.40.50.140:FF:000036">
    <property type="entry name" value="30S ribosomal protein S1"/>
    <property type="match status" value="1"/>
</dbReference>
<dbReference type="Gene3D" id="2.40.50.140">
    <property type="entry name" value="Nucleic acid-binding proteins"/>
    <property type="match status" value="6"/>
</dbReference>
<dbReference type="InterPro" id="IPR012340">
    <property type="entry name" value="NA-bd_OB-fold"/>
</dbReference>
<dbReference type="InterPro" id="IPR050437">
    <property type="entry name" value="Ribos_protein_bS1-like"/>
</dbReference>
<dbReference type="InterPro" id="IPR000110">
    <property type="entry name" value="Ribosomal_bS1"/>
</dbReference>
<dbReference type="InterPro" id="IPR035104">
    <property type="entry name" value="Ribosomal_protein_S1-like"/>
</dbReference>
<dbReference type="InterPro" id="IPR003029">
    <property type="entry name" value="S1_domain"/>
</dbReference>
<dbReference type="NCBIfam" id="NF004951">
    <property type="entry name" value="PRK06299.1-1"/>
    <property type="match status" value="1"/>
</dbReference>
<dbReference type="NCBIfam" id="NF004952">
    <property type="entry name" value="PRK06299.1-2"/>
    <property type="match status" value="1"/>
</dbReference>
<dbReference type="NCBIfam" id="NF004954">
    <property type="entry name" value="PRK06299.1-4"/>
    <property type="match status" value="1"/>
</dbReference>
<dbReference type="NCBIfam" id="TIGR00717">
    <property type="entry name" value="rpsA"/>
    <property type="match status" value="1"/>
</dbReference>
<dbReference type="PANTHER" id="PTHR10724">
    <property type="entry name" value="30S RIBOSOMAL PROTEIN S1"/>
    <property type="match status" value="1"/>
</dbReference>
<dbReference type="PANTHER" id="PTHR10724:SF7">
    <property type="entry name" value="SMALL RIBOSOMAL SUBUNIT PROTEIN BS1C"/>
    <property type="match status" value="1"/>
</dbReference>
<dbReference type="Pfam" id="PF00575">
    <property type="entry name" value="S1"/>
    <property type="match status" value="6"/>
</dbReference>
<dbReference type="PIRSF" id="PIRSF002111">
    <property type="entry name" value="RpsA"/>
    <property type="match status" value="1"/>
</dbReference>
<dbReference type="PRINTS" id="PR00681">
    <property type="entry name" value="RIBOSOMALS1"/>
</dbReference>
<dbReference type="SMART" id="SM00316">
    <property type="entry name" value="S1"/>
    <property type="match status" value="6"/>
</dbReference>
<dbReference type="SUPFAM" id="SSF50249">
    <property type="entry name" value="Nucleic acid-binding proteins"/>
    <property type="match status" value="6"/>
</dbReference>
<dbReference type="PROSITE" id="PS50126">
    <property type="entry name" value="S1"/>
    <property type="match status" value="6"/>
</dbReference>
<keyword id="KW-0007">Acetylation</keyword>
<keyword id="KW-0597">Phosphoprotein</keyword>
<keyword id="KW-1185">Reference proteome</keyword>
<keyword id="KW-0677">Repeat</keyword>
<keyword id="KW-0687">Ribonucleoprotein</keyword>
<keyword id="KW-0689">Ribosomal protein</keyword>
<keyword id="KW-0694">RNA-binding</keyword>
<sequence length="557" mass="61158">MTESFAQLFEESLKEIETRPGSIVRGVVVAIDKDVVLVDAGLKSESAIPAEQFKNAQGELEIQVGDEVDVALDAVEDGFGETLLSREKAKRHEAWITLEKAYEDAETVTGVINGKVKGGFTVELNGIRAFLPGSLVDVRPVRDTLHLEGKELEFKVIKLDQKRNNVVVSRRAVIESENSAERDQLLENLQEGMEVKGIVKNLTDYGAFVDLGGVDGLLHITDMAWKRVKHPSEIVNVGDEITVKVLKFDRERTRVSLGLKQLGEDPWVAIAKRYPEGTKLTGRVTNLTDYGCFVEIEEGVEGLVHVSEMDWTNKNIHPSKVVNVGDVVEVMVLDIDEERRRISLGLKQCKANPWQQFAETHNKGDRVEGKIKSITDFGIFIGLDGGIDGLVHLSDISWNVAGEEAVREYKKGDEIAAVVLQVDAERERISLGVKQLAEDPFNNWVALNKKGAIVTGKVTAVDAKGATVELADGVEGYLRASEASRDRVEDATLVLSVGDEVEAKFTGVDRKNRAISLSVRAKDEADEKDAIATVNKQEDANFSNNAMAEAFKAAKGE</sequence>
<feature type="chain" id="PRO_0000196035" description="Small ribosomal subunit protein bS1">
    <location>
        <begin position="1"/>
        <end position="557"/>
    </location>
</feature>
<feature type="domain" description="S1 motif 1" evidence="3">
    <location>
        <begin position="21"/>
        <end position="87"/>
    </location>
</feature>
<feature type="domain" description="S1 motif 2" evidence="3">
    <location>
        <begin position="105"/>
        <end position="171"/>
    </location>
</feature>
<feature type="domain" description="S1 motif 3" evidence="3">
    <location>
        <begin position="192"/>
        <end position="260"/>
    </location>
</feature>
<feature type="domain" description="S1 motif 4" evidence="3">
    <location>
        <begin position="277"/>
        <end position="347"/>
    </location>
</feature>
<feature type="domain" description="S1 motif 5" evidence="3">
    <location>
        <begin position="364"/>
        <end position="434"/>
    </location>
</feature>
<feature type="domain" description="S1 motif 6" evidence="3">
    <location>
        <begin position="451"/>
        <end position="520"/>
    </location>
</feature>
<feature type="modified residue" description="N6-acetyllysine" evidence="1">
    <location>
        <position position="229"/>
    </location>
</feature>
<feature type="modified residue" description="N6-acetyllysine" evidence="1">
    <location>
        <position position="279"/>
    </location>
</feature>
<feature type="modified residue" description="N6-acetyllysine" evidence="1">
    <location>
        <position position="363"/>
    </location>
</feature>
<gene>
    <name type="primary">rpsA</name>
    <name type="ordered locus">c1049</name>
</gene>